<name>TSAC_ALKEH</name>
<dbReference type="EC" id="2.7.7.87" evidence="1"/>
<dbReference type="EMBL" id="CP000453">
    <property type="protein sequence ID" value="ABI57973.1"/>
    <property type="molecule type" value="Genomic_DNA"/>
</dbReference>
<dbReference type="RefSeq" id="WP_011630366.1">
    <property type="nucleotide sequence ID" value="NC_008340.1"/>
</dbReference>
<dbReference type="SMR" id="Q0A5B4"/>
<dbReference type="KEGG" id="aeh:Mlg_2633"/>
<dbReference type="eggNOG" id="COG0009">
    <property type="taxonomic scope" value="Bacteria"/>
</dbReference>
<dbReference type="HOGENOM" id="CLU_031397_6_0_6"/>
<dbReference type="OrthoDB" id="9814580at2"/>
<dbReference type="Proteomes" id="UP000001962">
    <property type="component" value="Chromosome"/>
</dbReference>
<dbReference type="GO" id="GO:0005737">
    <property type="term" value="C:cytoplasm"/>
    <property type="evidence" value="ECO:0007669"/>
    <property type="project" value="UniProtKB-SubCell"/>
</dbReference>
<dbReference type="GO" id="GO:0005524">
    <property type="term" value="F:ATP binding"/>
    <property type="evidence" value="ECO:0007669"/>
    <property type="project" value="UniProtKB-UniRule"/>
</dbReference>
<dbReference type="GO" id="GO:0003725">
    <property type="term" value="F:double-stranded RNA binding"/>
    <property type="evidence" value="ECO:0007669"/>
    <property type="project" value="InterPro"/>
</dbReference>
<dbReference type="GO" id="GO:0061710">
    <property type="term" value="F:L-threonylcarbamoyladenylate synthase"/>
    <property type="evidence" value="ECO:0007669"/>
    <property type="project" value="UniProtKB-EC"/>
</dbReference>
<dbReference type="GO" id="GO:0000049">
    <property type="term" value="F:tRNA binding"/>
    <property type="evidence" value="ECO:0007669"/>
    <property type="project" value="TreeGrafter"/>
</dbReference>
<dbReference type="GO" id="GO:0006450">
    <property type="term" value="P:regulation of translational fidelity"/>
    <property type="evidence" value="ECO:0007669"/>
    <property type="project" value="TreeGrafter"/>
</dbReference>
<dbReference type="GO" id="GO:0002949">
    <property type="term" value="P:tRNA threonylcarbamoyladenosine modification"/>
    <property type="evidence" value="ECO:0007669"/>
    <property type="project" value="UniProtKB-UniRule"/>
</dbReference>
<dbReference type="Gene3D" id="3.90.870.10">
    <property type="entry name" value="DHBP synthase"/>
    <property type="match status" value="1"/>
</dbReference>
<dbReference type="HAMAP" id="MF_01852">
    <property type="entry name" value="TsaC"/>
    <property type="match status" value="1"/>
</dbReference>
<dbReference type="InterPro" id="IPR017945">
    <property type="entry name" value="DHBP_synth_RibB-like_a/b_dom"/>
</dbReference>
<dbReference type="InterPro" id="IPR006070">
    <property type="entry name" value="Sua5-like_dom"/>
</dbReference>
<dbReference type="InterPro" id="IPR023535">
    <property type="entry name" value="TC-AMP_synthase"/>
</dbReference>
<dbReference type="InterPro" id="IPR050156">
    <property type="entry name" value="TC-AMP_synthase_SUA5"/>
</dbReference>
<dbReference type="PANTHER" id="PTHR17490">
    <property type="entry name" value="SUA5"/>
    <property type="match status" value="1"/>
</dbReference>
<dbReference type="PANTHER" id="PTHR17490:SF18">
    <property type="entry name" value="THREONYLCARBAMOYL-AMP SYNTHASE"/>
    <property type="match status" value="1"/>
</dbReference>
<dbReference type="Pfam" id="PF01300">
    <property type="entry name" value="Sua5_yciO_yrdC"/>
    <property type="match status" value="1"/>
</dbReference>
<dbReference type="SUPFAM" id="SSF55821">
    <property type="entry name" value="YrdC/RibB"/>
    <property type="match status" value="1"/>
</dbReference>
<dbReference type="PROSITE" id="PS51163">
    <property type="entry name" value="YRDC"/>
    <property type="match status" value="1"/>
</dbReference>
<organism>
    <name type="scientific">Alkalilimnicola ehrlichii (strain ATCC BAA-1101 / DSM 17681 / MLHE-1)</name>
    <dbReference type="NCBI Taxonomy" id="187272"/>
    <lineage>
        <taxon>Bacteria</taxon>
        <taxon>Pseudomonadati</taxon>
        <taxon>Pseudomonadota</taxon>
        <taxon>Gammaproteobacteria</taxon>
        <taxon>Chromatiales</taxon>
        <taxon>Ectothiorhodospiraceae</taxon>
        <taxon>Alkalilimnicola</taxon>
    </lineage>
</organism>
<proteinExistence type="inferred from homology"/>
<accession>Q0A5B4</accession>
<sequence>MPTETTPRFRIRQCAARLQAGGVVAYPTEAVYGLGCDPGDPAAVATLLTLKRRDPGKGLILIASRVSQLSPWLGDAPLPQAVLASWPGPNTWLLPAAPHTPAWITGGRAKVAVRVTAHPVAAALCEAFGGAIVSTSANRDGQPPARSATQVRTRLGAEAAELADILPGPVDRSARPTAIRDAESGAVIRA</sequence>
<evidence type="ECO:0000255" key="1">
    <source>
        <dbReference type="HAMAP-Rule" id="MF_01852"/>
    </source>
</evidence>
<feature type="chain" id="PRO_0000352898" description="Threonylcarbamoyl-AMP synthase">
    <location>
        <begin position="1"/>
        <end position="190"/>
    </location>
</feature>
<feature type="domain" description="YrdC-like" evidence="1">
    <location>
        <begin position="8"/>
        <end position="190"/>
    </location>
</feature>
<comment type="function">
    <text evidence="1">Required for the formation of a threonylcarbamoyl group on adenosine at position 37 (t(6)A37) in tRNAs that read codons beginning with adenine. Catalyzes the conversion of L-threonine, HCO(3)(-)/CO(2) and ATP to give threonylcarbamoyl-AMP (TC-AMP) as the acyladenylate intermediate, with the release of diphosphate.</text>
</comment>
<comment type="catalytic activity">
    <reaction evidence="1">
        <text>L-threonine + hydrogencarbonate + ATP = L-threonylcarbamoyladenylate + diphosphate + H2O</text>
        <dbReference type="Rhea" id="RHEA:36407"/>
        <dbReference type="ChEBI" id="CHEBI:15377"/>
        <dbReference type="ChEBI" id="CHEBI:17544"/>
        <dbReference type="ChEBI" id="CHEBI:30616"/>
        <dbReference type="ChEBI" id="CHEBI:33019"/>
        <dbReference type="ChEBI" id="CHEBI:57926"/>
        <dbReference type="ChEBI" id="CHEBI:73682"/>
        <dbReference type="EC" id="2.7.7.87"/>
    </reaction>
</comment>
<comment type="subcellular location">
    <subcellularLocation>
        <location evidence="1">Cytoplasm</location>
    </subcellularLocation>
</comment>
<comment type="similarity">
    <text evidence="1">Belongs to the SUA5 family. TsaC subfamily.</text>
</comment>
<protein>
    <recommendedName>
        <fullName evidence="1">Threonylcarbamoyl-AMP synthase</fullName>
        <shortName evidence="1">TC-AMP synthase</shortName>
        <ecNumber evidence="1">2.7.7.87</ecNumber>
    </recommendedName>
    <alternativeName>
        <fullName evidence="1">L-threonylcarbamoyladenylate synthase</fullName>
    </alternativeName>
    <alternativeName>
        <fullName evidence="1">t(6)A37 threonylcarbamoyladenosine biosynthesis protein TsaC</fullName>
    </alternativeName>
    <alternativeName>
        <fullName evidence="1">tRNA threonylcarbamoyladenosine biosynthesis protein TsaC</fullName>
    </alternativeName>
</protein>
<keyword id="KW-0067">ATP-binding</keyword>
<keyword id="KW-0963">Cytoplasm</keyword>
<keyword id="KW-0547">Nucleotide-binding</keyword>
<keyword id="KW-0548">Nucleotidyltransferase</keyword>
<keyword id="KW-1185">Reference proteome</keyword>
<keyword id="KW-0808">Transferase</keyword>
<keyword id="KW-0819">tRNA processing</keyword>
<gene>
    <name evidence="1" type="primary">tsaC</name>
    <name type="synonym">rimN</name>
    <name type="ordered locus">Mlg_2633</name>
</gene>
<reference key="1">
    <citation type="submission" date="2006-08" db="EMBL/GenBank/DDBJ databases">
        <title>Complete sequence of Alkalilimnicola ehrilichei MLHE-1.</title>
        <authorList>
            <person name="Copeland A."/>
            <person name="Lucas S."/>
            <person name="Lapidus A."/>
            <person name="Barry K."/>
            <person name="Detter J.C."/>
            <person name="Glavina del Rio T."/>
            <person name="Hammon N."/>
            <person name="Israni S."/>
            <person name="Dalin E."/>
            <person name="Tice H."/>
            <person name="Pitluck S."/>
            <person name="Sims D."/>
            <person name="Brettin T."/>
            <person name="Bruce D."/>
            <person name="Han C."/>
            <person name="Tapia R."/>
            <person name="Gilna P."/>
            <person name="Schmutz J."/>
            <person name="Larimer F."/>
            <person name="Land M."/>
            <person name="Hauser L."/>
            <person name="Kyrpides N."/>
            <person name="Mikhailova N."/>
            <person name="Oremland R.S."/>
            <person name="Hoeft S.E."/>
            <person name="Switzer-Blum J."/>
            <person name="Kulp T."/>
            <person name="King G."/>
            <person name="Tabita R."/>
            <person name="Witte B."/>
            <person name="Santini J.M."/>
            <person name="Basu P."/>
            <person name="Hollibaugh J.T."/>
            <person name="Xie G."/>
            <person name="Stolz J.F."/>
            <person name="Richardson P."/>
        </authorList>
    </citation>
    <scope>NUCLEOTIDE SEQUENCE [LARGE SCALE GENOMIC DNA]</scope>
    <source>
        <strain>ATCC BAA-1101 / DSM 17681 / MLHE-1</strain>
    </source>
</reference>